<accession>Q111E8</accession>
<comment type="function">
    <text evidence="1">Possible low-potential cytochrome c.</text>
</comment>
<comment type="cofactor">
    <cofactor evidence="1">
        <name>heme c</name>
        <dbReference type="ChEBI" id="CHEBI:61717"/>
    </cofactor>
    <text evidence="1">Binds 1 heme c group covalently per subunit.</text>
</comment>
<comment type="subcellular location">
    <subcellularLocation>
        <location evidence="4">Cellular thylakoid membrane</location>
        <topology evidence="4">Peripheral membrane protein</topology>
        <orientation evidence="4">Lumenal side</orientation>
    </subcellularLocation>
</comment>
<comment type="similarity">
    <text evidence="4">Belongs to the cytochrome c family. PsbV subfamily.</text>
</comment>
<gene>
    <name type="primary">psbV2</name>
    <name type="ordered locus">Tery_2687</name>
</gene>
<reference key="1">
    <citation type="journal article" date="2015" name="Proc. Natl. Acad. Sci. U.S.A.">
        <title>Trichodesmium genome maintains abundant, widespread noncoding DNA in situ, despite oligotrophic lifestyle.</title>
        <authorList>
            <person name="Walworth N."/>
            <person name="Pfreundt U."/>
            <person name="Nelson W.C."/>
            <person name="Mincer T."/>
            <person name="Heidelberg J.F."/>
            <person name="Fu F."/>
            <person name="Waterbury J.B."/>
            <person name="Glavina del Rio T."/>
            <person name="Goodwin L."/>
            <person name="Kyrpides N.C."/>
            <person name="Land M.L."/>
            <person name="Woyke T."/>
            <person name="Hutchins D.A."/>
            <person name="Hess W.R."/>
            <person name="Webb E.A."/>
        </authorList>
    </citation>
    <scope>NUCLEOTIDE SEQUENCE [LARGE SCALE GENOMIC DNA]</scope>
    <source>
        <strain>IMS101</strain>
    </source>
</reference>
<sequence length="165" mass="18490">MLNKSLLIRFVLTILIIVQVIIFDTQPVQAAVDSYVKRYLDAEIPVGIKLNKQGELKNFSAEDLSEGKQTFAKNCLNCHVGGANLVNPSVSLSLEKLKGATPPRDDLNNLVAFLRDPMIYDGSSYTLFCRQITENWMSQQEVENIAAFILRAAQKAPYWGVENVR</sequence>
<evidence type="ECO:0000250" key="1">
    <source>
        <dbReference type="UniProtKB" id="Q8DJE2"/>
    </source>
</evidence>
<evidence type="ECO:0000255" key="2"/>
<evidence type="ECO:0000255" key="3">
    <source>
        <dbReference type="PROSITE-ProRule" id="PRU00433"/>
    </source>
</evidence>
<evidence type="ECO:0000305" key="4"/>
<protein>
    <recommendedName>
        <fullName>Cytochrome c-550-like protein</fullName>
    </recommendedName>
</protein>
<feature type="signal peptide" evidence="2">
    <location>
        <begin position="1"/>
        <end position="30"/>
    </location>
</feature>
<feature type="chain" id="PRO_5000126971" description="Cytochrome c-550-like protein">
    <location>
        <begin position="31"/>
        <end position="165"/>
    </location>
</feature>
<feature type="binding site" description="covalent" evidence="3">
    <location>
        <position position="75"/>
    </location>
    <ligand>
        <name>heme c</name>
        <dbReference type="ChEBI" id="CHEBI:61717"/>
    </ligand>
</feature>
<feature type="binding site" description="covalent" evidence="3">
    <location>
        <position position="78"/>
    </location>
    <ligand>
        <name>heme c</name>
        <dbReference type="ChEBI" id="CHEBI:61717"/>
    </ligand>
</feature>
<feature type="binding site" description="axial binding residue" evidence="3">
    <location>
        <position position="79"/>
    </location>
    <ligand>
        <name>heme c</name>
        <dbReference type="ChEBI" id="CHEBI:61717"/>
    </ligand>
    <ligandPart>
        <name>Fe</name>
        <dbReference type="ChEBI" id="CHEBI:18248"/>
    </ligandPart>
</feature>
<feature type="binding site" evidence="1">
    <location>
        <position position="129"/>
    </location>
    <ligand>
        <name>heme c</name>
        <dbReference type="ChEBI" id="CHEBI:61717"/>
    </ligand>
    <ligandPart>
        <name>Fe</name>
        <dbReference type="ChEBI" id="CHEBI:18248"/>
    </ligandPart>
</feature>
<proteinExistence type="inferred from homology"/>
<name>PSBV2_TRIEI</name>
<keyword id="KW-0249">Electron transport</keyword>
<keyword id="KW-0349">Heme</keyword>
<keyword id="KW-0408">Iron</keyword>
<keyword id="KW-0472">Membrane</keyword>
<keyword id="KW-0479">Metal-binding</keyword>
<keyword id="KW-0602">Photosynthesis</keyword>
<keyword id="KW-0604">Photosystem II</keyword>
<keyword id="KW-0732">Signal</keyword>
<keyword id="KW-0793">Thylakoid</keyword>
<keyword id="KW-0813">Transport</keyword>
<organism>
    <name type="scientific">Trichodesmium erythraeum (strain IMS101)</name>
    <dbReference type="NCBI Taxonomy" id="203124"/>
    <lineage>
        <taxon>Bacteria</taxon>
        <taxon>Bacillati</taxon>
        <taxon>Cyanobacteriota</taxon>
        <taxon>Cyanophyceae</taxon>
        <taxon>Oscillatoriophycideae</taxon>
        <taxon>Oscillatoriales</taxon>
        <taxon>Microcoleaceae</taxon>
        <taxon>Trichodesmium</taxon>
    </lineage>
</organism>
<dbReference type="EMBL" id="CP000393">
    <property type="protein sequence ID" value="ABG51876.1"/>
    <property type="molecule type" value="Genomic_DNA"/>
</dbReference>
<dbReference type="RefSeq" id="WP_011612238.1">
    <property type="nucleotide sequence ID" value="NC_008312.1"/>
</dbReference>
<dbReference type="SMR" id="Q111E8"/>
<dbReference type="STRING" id="203124.Tery_2687"/>
<dbReference type="KEGG" id="ter:Tery_2687"/>
<dbReference type="eggNOG" id="COG2010">
    <property type="taxonomic scope" value="Bacteria"/>
</dbReference>
<dbReference type="HOGENOM" id="CLU_104149_0_0_3"/>
<dbReference type="OrthoDB" id="486949at2"/>
<dbReference type="GO" id="GO:0009523">
    <property type="term" value="C:photosystem II"/>
    <property type="evidence" value="ECO:0007669"/>
    <property type="project" value="UniProtKB-KW"/>
</dbReference>
<dbReference type="GO" id="GO:0031676">
    <property type="term" value="C:plasma membrane-derived thylakoid membrane"/>
    <property type="evidence" value="ECO:0007669"/>
    <property type="project" value="UniProtKB-SubCell"/>
</dbReference>
<dbReference type="GO" id="GO:0009055">
    <property type="term" value="F:electron transfer activity"/>
    <property type="evidence" value="ECO:0007669"/>
    <property type="project" value="InterPro"/>
</dbReference>
<dbReference type="GO" id="GO:0020037">
    <property type="term" value="F:heme binding"/>
    <property type="evidence" value="ECO:0007669"/>
    <property type="project" value="InterPro"/>
</dbReference>
<dbReference type="GO" id="GO:0005506">
    <property type="term" value="F:iron ion binding"/>
    <property type="evidence" value="ECO:0007669"/>
    <property type="project" value="InterPro"/>
</dbReference>
<dbReference type="GO" id="GO:0015979">
    <property type="term" value="P:photosynthesis"/>
    <property type="evidence" value="ECO:0007669"/>
    <property type="project" value="UniProtKB-KW"/>
</dbReference>
<dbReference type="GO" id="GO:0022904">
    <property type="term" value="P:respiratory electron transport chain"/>
    <property type="evidence" value="ECO:0007669"/>
    <property type="project" value="InterPro"/>
</dbReference>
<dbReference type="Gene3D" id="1.10.760.10">
    <property type="entry name" value="Cytochrome c-like domain"/>
    <property type="match status" value="1"/>
</dbReference>
<dbReference type="InterPro" id="IPR009056">
    <property type="entry name" value="Cyt_c-like_dom"/>
</dbReference>
<dbReference type="InterPro" id="IPR036909">
    <property type="entry name" value="Cyt_c-like_dom_sf"/>
</dbReference>
<dbReference type="InterPro" id="IPR029490">
    <property type="entry name" value="Cytochrom_C550"/>
</dbReference>
<dbReference type="InterPro" id="IPR016003">
    <property type="entry name" value="PsbV_cyt_c550-like"/>
</dbReference>
<dbReference type="NCBIfam" id="TIGR03046">
    <property type="entry name" value="PS_II_psbV2"/>
    <property type="match status" value="1"/>
</dbReference>
<dbReference type="Pfam" id="PF14495">
    <property type="entry name" value="Cytochrom_C550"/>
    <property type="match status" value="1"/>
</dbReference>
<dbReference type="PIRSF" id="PIRSF005890">
    <property type="entry name" value="Phot_II_cyt_c550"/>
    <property type="match status" value="1"/>
</dbReference>
<dbReference type="SUPFAM" id="SSF46626">
    <property type="entry name" value="Cytochrome c"/>
    <property type="match status" value="1"/>
</dbReference>
<dbReference type="PROSITE" id="PS51007">
    <property type="entry name" value="CYTC"/>
    <property type="match status" value="1"/>
</dbReference>